<evidence type="ECO:0000255" key="1">
    <source>
        <dbReference type="HAMAP-Rule" id="MF_00508"/>
    </source>
</evidence>
<evidence type="ECO:0000305" key="2"/>
<feature type="chain" id="PRO_1000015029" description="Small ribosomal subunit protein uS10">
    <location>
        <begin position="1"/>
        <end position="101"/>
    </location>
</feature>
<name>RS10_CHRFK</name>
<comment type="function">
    <text evidence="1">Involved in the binding of tRNA to the ribosomes.</text>
</comment>
<comment type="subunit">
    <text evidence="1">Part of the 30S ribosomal subunit.</text>
</comment>
<comment type="similarity">
    <text evidence="1">Belongs to the universal ribosomal protein uS10 family.</text>
</comment>
<dbReference type="EMBL" id="CU207366">
    <property type="protein sequence ID" value="CAL67794.1"/>
    <property type="molecule type" value="Genomic_DNA"/>
</dbReference>
<dbReference type="RefSeq" id="WP_010519396.1">
    <property type="nucleotide sequence ID" value="NC_008571.1"/>
</dbReference>
<dbReference type="SMR" id="A0M599"/>
<dbReference type="STRING" id="411154.GFO_2840"/>
<dbReference type="KEGG" id="gfo:GFO_2840"/>
<dbReference type="eggNOG" id="COG0051">
    <property type="taxonomic scope" value="Bacteria"/>
</dbReference>
<dbReference type="HOGENOM" id="CLU_122625_1_3_10"/>
<dbReference type="OrthoDB" id="9804464at2"/>
<dbReference type="Proteomes" id="UP000000755">
    <property type="component" value="Chromosome"/>
</dbReference>
<dbReference type="GO" id="GO:1990904">
    <property type="term" value="C:ribonucleoprotein complex"/>
    <property type="evidence" value="ECO:0007669"/>
    <property type="project" value="UniProtKB-KW"/>
</dbReference>
<dbReference type="GO" id="GO:0005840">
    <property type="term" value="C:ribosome"/>
    <property type="evidence" value="ECO:0007669"/>
    <property type="project" value="UniProtKB-KW"/>
</dbReference>
<dbReference type="GO" id="GO:0003735">
    <property type="term" value="F:structural constituent of ribosome"/>
    <property type="evidence" value="ECO:0007669"/>
    <property type="project" value="InterPro"/>
</dbReference>
<dbReference type="GO" id="GO:0000049">
    <property type="term" value="F:tRNA binding"/>
    <property type="evidence" value="ECO:0007669"/>
    <property type="project" value="UniProtKB-UniRule"/>
</dbReference>
<dbReference type="GO" id="GO:0006412">
    <property type="term" value="P:translation"/>
    <property type="evidence" value="ECO:0007669"/>
    <property type="project" value="UniProtKB-UniRule"/>
</dbReference>
<dbReference type="FunFam" id="3.30.70.600:FF:000003">
    <property type="entry name" value="30S ribosomal protein S10"/>
    <property type="match status" value="1"/>
</dbReference>
<dbReference type="Gene3D" id="3.30.70.600">
    <property type="entry name" value="Ribosomal protein S10 domain"/>
    <property type="match status" value="1"/>
</dbReference>
<dbReference type="HAMAP" id="MF_00508">
    <property type="entry name" value="Ribosomal_uS10"/>
    <property type="match status" value="1"/>
</dbReference>
<dbReference type="InterPro" id="IPR001848">
    <property type="entry name" value="Ribosomal_uS10"/>
</dbReference>
<dbReference type="InterPro" id="IPR018268">
    <property type="entry name" value="Ribosomal_uS10_CS"/>
</dbReference>
<dbReference type="InterPro" id="IPR027486">
    <property type="entry name" value="Ribosomal_uS10_dom"/>
</dbReference>
<dbReference type="InterPro" id="IPR036838">
    <property type="entry name" value="Ribosomal_uS10_dom_sf"/>
</dbReference>
<dbReference type="NCBIfam" id="NF001861">
    <property type="entry name" value="PRK00596.1"/>
    <property type="match status" value="1"/>
</dbReference>
<dbReference type="NCBIfam" id="TIGR01049">
    <property type="entry name" value="rpsJ_bact"/>
    <property type="match status" value="1"/>
</dbReference>
<dbReference type="PANTHER" id="PTHR11700">
    <property type="entry name" value="30S RIBOSOMAL PROTEIN S10 FAMILY MEMBER"/>
    <property type="match status" value="1"/>
</dbReference>
<dbReference type="Pfam" id="PF00338">
    <property type="entry name" value="Ribosomal_S10"/>
    <property type="match status" value="1"/>
</dbReference>
<dbReference type="PRINTS" id="PR00971">
    <property type="entry name" value="RIBOSOMALS10"/>
</dbReference>
<dbReference type="SMART" id="SM01403">
    <property type="entry name" value="Ribosomal_S10"/>
    <property type="match status" value="1"/>
</dbReference>
<dbReference type="SUPFAM" id="SSF54999">
    <property type="entry name" value="Ribosomal protein S10"/>
    <property type="match status" value="1"/>
</dbReference>
<dbReference type="PROSITE" id="PS00361">
    <property type="entry name" value="RIBOSOMAL_S10"/>
    <property type="match status" value="1"/>
</dbReference>
<protein>
    <recommendedName>
        <fullName evidence="1">Small ribosomal subunit protein uS10</fullName>
    </recommendedName>
    <alternativeName>
        <fullName evidence="2">30S ribosomal protein S10</fullName>
    </alternativeName>
</protein>
<organism>
    <name type="scientific">Christiangramia forsetii (strain DSM 17595 / CGMCC 1.15422 / KT0803)</name>
    <name type="common">Gramella forsetii</name>
    <dbReference type="NCBI Taxonomy" id="411154"/>
    <lineage>
        <taxon>Bacteria</taxon>
        <taxon>Pseudomonadati</taxon>
        <taxon>Bacteroidota</taxon>
        <taxon>Flavobacteriia</taxon>
        <taxon>Flavobacteriales</taxon>
        <taxon>Flavobacteriaceae</taxon>
        <taxon>Christiangramia</taxon>
    </lineage>
</organism>
<accession>A0M599</accession>
<reference key="1">
    <citation type="journal article" date="2006" name="Environ. Microbiol.">
        <title>Whole genome analysis of the marine Bacteroidetes'Gramella forsetii' reveals adaptations to degradation of polymeric organic matter.</title>
        <authorList>
            <person name="Bauer M."/>
            <person name="Kube M."/>
            <person name="Teeling H."/>
            <person name="Richter M."/>
            <person name="Lombardot T."/>
            <person name="Allers E."/>
            <person name="Wuerdemann C.A."/>
            <person name="Quast C."/>
            <person name="Kuhl H."/>
            <person name="Knaust F."/>
            <person name="Woebken D."/>
            <person name="Bischof K."/>
            <person name="Mussmann M."/>
            <person name="Choudhuri J.V."/>
            <person name="Meyer F."/>
            <person name="Reinhardt R."/>
            <person name="Amann R.I."/>
            <person name="Gloeckner F.O."/>
        </authorList>
    </citation>
    <scope>NUCLEOTIDE SEQUENCE [LARGE SCALE GENOMIC DNA]</scope>
    <source>
        <strain>DSM 17595 / CGMCC 1.15422 / KT0803</strain>
    </source>
</reference>
<sequence length="101" mass="11370">MSQKIRIKLKSYDHNLVDKSAEKIVKTVKTTGAVVTGPIPLPTNKKIFTVLRSPHVNKKSREQFELSSYKRLLDIYSSSSKTIDALMKLELPSGVEVEIKV</sequence>
<proteinExistence type="inferred from homology"/>
<gene>
    <name evidence="1" type="primary">rpsJ</name>
    <name type="ordered locus">GFO_2840</name>
</gene>
<keyword id="KW-0687">Ribonucleoprotein</keyword>
<keyword id="KW-0689">Ribosomal protein</keyword>